<protein>
    <recommendedName>
        <fullName evidence="1">Large ribosomal subunit protein uL22</fullName>
    </recommendedName>
    <alternativeName>
        <fullName evidence="2">50S ribosomal protein L22</fullName>
    </alternativeName>
</protein>
<keyword id="KW-1185">Reference proteome</keyword>
<keyword id="KW-0687">Ribonucleoprotein</keyword>
<keyword id="KW-0689">Ribosomal protein</keyword>
<keyword id="KW-0694">RNA-binding</keyword>
<keyword id="KW-0699">rRNA-binding</keyword>
<sequence>MPRWGYSVKLRDESEVAKAVLRNVPVHPKIMAEVARAISGMRVDEARRYLRAVIEKREAVPFRRAHGKQAHRRGLADKWGWPVGRYPVKAARYMLKLLDNVEANAANKNLDVERLKIIHVAAHKGITLKRWMPRAWGRATPRNRVHSHIEIMVREV</sequence>
<accession>Q9YF76</accession>
<organism>
    <name type="scientific">Aeropyrum pernix (strain ATCC 700893 / DSM 11879 / JCM 9820 / NBRC 100138 / K1)</name>
    <dbReference type="NCBI Taxonomy" id="272557"/>
    <lineage>
        <taxon>Archaea</taxon>
        <taxon>Thermoproteota</taxon>
        <taxon>Thermoprotei</taxon>
        <taxon>Desulfurococcales</taxon>
        <taxon>Desulfurococcaceae</taxon>
        <taxon>Aeropyrum</taxon>
    </lineage>
</organism>
<comment type="function">
    <text evidence="1">This protein binds specifically to 23S rRNA. It makes multiple contacts with different domains of the 23S rRNA in the assembled 50S subunit and ribosome.</text>
</comment>
<comment type="function">
    <text evidence="1">The globular domain of the protein is located near the polypeptide exit tunnel on the outside of the subunit, while an extended beta-hairpin is found that lines the wall of the exit tunnel in the center of the 70S ribosome.</text>
</comment>
<comment type="subunit">
    <text evidence="1">Part of the 50S ribosomal subunit.</text>
</comment>
<comment type="similarity">
    <text evidence="1">Belongs to the universal ribosomal protein uL22 family.</text>
</comment>
<proteinExistence type="inferred from homology"/>
<gene>
    <name evidence="1" type="primary">rpl22</name>
    <name type="ordered locus">APE_0365</name>
</gene>
<dbReference type="EMBL" id="BA000002">
    <property type="protein sequence ID" value="BAA79320.1"/>
    <property type="molecule type" value="Genomic_DNA"/>
</dbReference>
<dbReference type="PIR" id="D72728">
    <property type="entry name" value="D72728"/>
</dbReference>
<dbReference type="RefSeq" id="WP_010865695.1">
    <property type="nucleotide sequence ID" value="NC_000854.2"/>
</dbReference>
<dbReference type="SMR" id="Q9YF76"/>
<dbReference type="STRING" id="272557.APE_0365"/>
<dbReference type="EnsemblBacteria" id="BAA79320">
    <property type="protein sequence ID" value="BAA79320"/>
    <property type="gene ID" value="APE_0365"/>
</dbReference>
<dbReference type="GeneID" id="1444577"/>
<dbReference type="KEGG" id="ape:APE_0365"/>
<dbReference type="PATRIC" id="fig|272557.25.peg.281"/>
<dbReference type="eggNOG" id="arCOG04098">
    <property type="taxonomic scope" value="Archaea"/>
</dbReference>
<dbReference type="Proteomes" id="UP000002518">
    <property type="component" value="Chromosome"/>
</dbReference>
<dbReference type="GO" id="GO:0022625">
    <property type="term" value="C:cytosolic large ribosomal subunit"/>
    <property type="evidence" value="ECO:0007669"/>
    <property type="project" value="TreeGrafter"/>
</dbReference>
<dbReference type="GO" id="GO:0019843">
    <property type="term" value="F:rRNA binding"/>
    <property type="evidence" value="ECO:0007669"/>
    <property type="project" value="UniProtKB-UniRule"/>
</dbReference>
<dbReference type="GO" id="GO:0003735">
    <property type="term" value="F:structural constituent of ribosome"/>
    <property type="evidence" value="ECO:0007669"/>
    <property type="project" value="InterPro"/>
</dbReference>
<dbReference type="GO" id="GO:0002181">
    <property type="term" value="P:cytoplasmic translation"/>
    <property type="evidence" value="ECO:0007669"/>
    <property type="project" value="TreeGrafter"/>
</dbReference>
<dbReference type="CDD" id="cd00336">
    <property type="entry name" value="Ribosomal_L22"/>
    <property type="match status" value="1"/>
</dbReference>
<dbReference type="Gene3D" id="3.90.470.10">
    <property type="entry name" value="Ribosomal protein L22/L17"/>
    <property type="match status" value="1"/>
</dbReference>
<dbReference type="HAMAP" id="MF_01331_A">
    <property type="entry name" value="Ribosomal_uL22_A"/>
    <property type="match status" value="1"/>
</dbReference>
<dbReference type="InterPro" id="IPR001063">
    <property type="entry name" value="Ribosomal_uL22"/>
</dbReference>
<dbReference type="InterPro" id="IPR018260">
    <property type="entry name" value="Ribosomal_uL22_CS"/>
</dbReference>
<dbReference type="InterPro" id="IPR005721">
    <property type="entry name" value="Ribosomal_uL22_euk/arc"/>
</dbReference>
<dbReference type="InterPro" id="IPR036394">
    <property type="entry name" value="Ribosomal_uL22_sf"/>
</dbReference>
<dbReference type="NCBIfam" id="NF003260">
    <property type="entry name" value="PRK04223.1"/>
    <property type="match status" value="1"/>
</dbReference>
<dbReference type="NCBIfam" id="TIGR01038">
    <property type="entry name" value="uL22_arch_euk"/>
    <property type="match status" value="1"/>
</dbReference>
<dbReference type="PANTHER" id="PTHR11593">
    <property type="entry name" value="60S RIBOSOMAL PROTEIN L17"/>
    <property type="match status" value="1"/>
</dbReference>
<dbReference type="PANTHER" id="PTHR11593:SF10">
    <property type="entry name" value="60S RIBOSOMAL PROTEIN L17"/>
    <property type="match status" value="1"/>
</dbReference>
<dbReference type="Pfam" id="PF00237">
    <property type="entry name" value="Ribosomal_L22"/>
    <property type="match status" value="1"/>
</dbReference>
<dbReference type="SUPFAM" id="SSF54843">
    <property type="entry name" value="Ribosomal protein L22"/>
    <property type="match status" value="1"/>
</dbReference>
<dbReference type="PROSITE" id="PS00464">
    <property type="entry name" value="RIBOSOMAL_L22"/>
    <property type="match status" value="1"/>
</dbReference>
<reference key="1">
    <citation type="journal article" date="1999" name="DNA Res.">
        <title>Complete genome sequence of an aerobic hyper-thermophilic crenarchaeon, Aeropyrum pernix K1.</title>
        <authorList>
            <person name="Kawarabayasi Y."/>
            <person name="Hino Y."/>
            <person name="Horikawa H."/>
            <person name="Yamazaki S."/>
            <person name="Haikawa Y."/>
            <person name="Jin-no K."/>
            <person name="Takahashi M."/>
            <person name="Sekine M."/>
            <person name="Baba S."/>
            <person name="Ankai A."/>
            <person name="Kosugi H."/>
            <person name="Hosoyama A."/>
            <person name="Fukui S."/>
            <person name="Nagai Y."/>
            <person name="Nishijima K."/>
            <person name="Nakazawa H."/>
            <person name="Takamiya M."/>
            <person name="Masuda S."/>
            <person name="Funahashi T."/>
            <person name="Tanaka T."/>
            <person name="Kudoh Y."/>
            <person name="Yamazaki J."/>
            <person name="Kushida N."/>
            <person name="Oguchi A."/>
            <person name="Aoki K."/>
            <person name="Kubota K."/>
            <person name="Nakamura Y."/>
            <person name="Nomura N."/>
            <person name="Sako Y."/>
            <person name="Kikuchi H."/>
        </authorList>
    </citation>
    <scope>NUCLEOTIDE SEQUENCE [LARGE SCALE GENOMIC DNA]</scope>
    <source>
        <strain>ATCC 700893 / DSM 11879 / JCM 9820 / NBRC 100138 / K1</strain>
    </source>
</reference>
<feature type="chain" id="PRO_0000125270" description="Large ribosomal subunit protein uL22">
    <location>
        <begin position="1"/>
        <end position="156"/>
    </location>
</feature>
<name>RL22_AERPE</name>
<evidence type="ECO:0000255" key="1">
    <source>
        <dbReference type="HAMAP-Rule" id="MF_01331"/>
    </source>
</evidence>
<evidence type="ECO:0000305" key="2"/>